<name>PXN1_XENLA</name>
<dbReference type="EMBL" id="L19881">
    <property type="protein sequence ID" value="AAC38013.1"/>
    <property type="molecule type" value="mRNA"/>
</dbReference>
<dbReference type="SMR" id="P49263"/>
<dbReference type="CAZy" id="CBM47">
    <property type="family name" value="Carbohydrate-Binding Module Family 47"/>
</dbReference>
<dbReference type="GlyCosmos" id="P49263">
    <property type="glycosylation" value="2 sites, No reported glycans"/>
</dbReference>
<dbReference type="AGR" id="Xenbase:XB-GENE-5878615"/>
<dbReference type="Xenbase" id="XB-GENE-5878615">
    <property type="gene designation" value="ptx.S"/>
</dbReference>
<dbReference type="Proteomes" id="UP000186698">
    <property type="component" value="Unplaced"/>
</dbReference>
<dbReference type="GO" id="GO:0046872">
    <property type="term" value="F:metal ion binding"/>
    <property type="evidence" value="ECO:0007669"/>
    <property type="project" value="UniProtKB-KW"/>
</dbReference>
<dbReference type="CDD" id="cd00152">
    <property type="entry name" value="PTX"/>
    <property type="match status" value="1"/>
</dbReference>
<dbReference type="Gene3D" id="2.60.120.200">
    <property type="match status" value="1"/>
</dbReference>
<dbReference type="Gene3D" id="2.60.120.260">
    <property type="entry name" value="Galactose-binding domain-like"/>
    <property type="match status" value="1"/>
</dbReference>
<dbReference type="InterPro" id="IPR013320">
    <property type="entry name" value="ConA-like_dom_sf"/>
</dbReference>
<dbReference type="InterPro" id="IPR006585">
    <property type="entry name" value="FTP1"/>
</dbReference>
<dbReference type="InterPro" id="IPR008979">
    <property type="entry name" value="Galactose-bd-like_sf"/>
</dbReference>
<dbReference type="InterPro" id="IPR030476">
    <property type="entry name" value="Pentaxin_CS"/>
</dbReference>
<dbReference type="InterPro" id="IPR001759">
    <property type="entry name" value="Pentraxin-related"/>
</dbReference>
<dbReference type="InterPro" id="IPR051005">
    <property type="entry name" value="Pentraxin_domain"/>
</dbReference>
<dbReference type="PANTHER" id="PTHR45869">
    <property type="entry name" value="C-REACTIVE PROTEIN-RELATED"/>
    <property type="match status" value="1"/>
</dbReference>
<dbReference type="PANTHER" id="PTHR45869:SF2">
    <property type="entry name" value="C-REACTIVE PROTEIN-RELATED"/>
    <property type="match status" value="1"/>
</dbReference>
<dbReference type="Pfam" id="PF22633">
    <property type="entry name" value="F5_F8_type_C_2"/>
    <property type="match status" value="1"/>
</dbReference>
<dbReference type="Pfam" id="PF00354">
    <property type="entry name" value="Pentaxin"/>
    <property type="match status" value="1"/>
</dbReference>
<dbReference type="PRINTS" id="PR00895">
    <property type="entry name" value="PENTAXIN"/>
</dbReference>
<dbReference type="SMART" id="SM00607">
    <property type="entry name" value="FTP"/>
    <property type="match status" value="1"/>
</dbReference>
<dbReference type="SMART" id="SM00159">
    <property type="entry name" value="PTX"/>
    <property type="match status" value="1"/>
</dbReference>
<dbReference type="SUPFAM" id="SSF49899">
    <property type="entry name" value="Concanavalin A-like lectins/glucanases"/>
    <property type="match status" value="1"/>
</dbReference>
<dbReference type="SUPFAM" id="SSF49785">
    <property type="entry name" value="Galactose-binding domain-like"/>
    <property type="match status" value="1"/>
</dbReference>
<dbReference type="PROSITE" id="PS00289">
    <property type="entry name" value="PTX_1"/>
    <property type="match status" value="1"/>
</dbReference>
<dbReference type="PROSITE" id="PS51828">
    <property type="entry name" value="PTX_2"/>
    <property type="match status" value="1"/>
</dbReference>
<comment type="cofactor">
    <cofactor evidence="1">
        <name>Ca(2+)</name>
        <dbReference type="ChEBI" id="CHEBI:29108"/>
    </cofactor>
    <text evidence="1">Binds 2 calcium ions per subunit.</text>
</comment>
<feature type="signal peptide" evidence="2">
    <location>
        <begin position="1"/>
        <end position="14"/>
    </location>
</feature>
<feature type="chain" id="PRO_0000023554" description="Pentraxin fusion protein">
    <location>
        <begin position="15"/>
        <end position="416"/>
    </location>
</feature>
<feature type="domain" description="Pentraxin (PTX)" evidence="3">
    <location>
        <begin position="220"/>
        <end position="416"/>
    </location>
</feature>
<feature type="region of interest" description="Disordered" evidence="4">
    <location>
        <begin position="184"/>
        <end position="206"/>
    </location>
</feature>
<feature type="binding site" evidence="1">
    <location>
        <position position="275"/>
    </location>
    <ligand>
        <name>Ca(2+)</name>
        <dbReference type="ChEBI" id="CHEBI:29108"/>
        <label>1</label>
    </ligand>
</feature>
<feature type="binding site" evidence="1">
    <location>
        <position position="353"/>
    </location>
    <ligand>
        <name>Ca(2+)</name>
        <dbReference type="ChEBI" id="CHEBI:29108"/>
        <label>1</label>
    </ligand>
</feature>
<feature type="binding site" evidence="1">
    <location>
        <position position="354"/>
    </location>
    <ligand>
        <name>Ca(2+)</name>
        <dbReference type="ChEBI" id="CHEBI:29108"/>
        <label>1</label>
    </ligand>
</feature>
<feature type="binding site" evidence="1">
    <location>
        <position position="354"/>
    </location>
    <ligand>
        <name>Ca(2+)</name>
        <dbReference type="ChEBI" id="CHEBI:29108"/>
        <label>2</label>
    </ligand>
</feature>
<feature type="binding site" evidence="1">
    <location>
        <position position="364"/>
    </location>
    <ligand>
        <name>Ca(2+)</name>
        <dbReference type="ChEBI" id="CHEBI:29108"/>
        <label>2</label>
    </ligand>
</feature>
<feature type="glycosylation site" description="N-linked (GlcNAc...) asparagine" evidence="2">
    <location>
        <position position="129"/>
    </location>
</feature>
<feature type="glycosylation site" description="N-linked (GlcNAc...) asparagine" evidence="2">
    <location>
        <position position="221"/>
    </location>
</feature>
<feature type="disulfide bond" evidence="3">
    <location>
        <begin position="251"/>
        <end position="311"/>
    </location>
</feature>
<sequence length="416" mass="47242">MKSLLLFLKSQVFGLTVETLNGERNGDFEQQKENHGAKNVAPQGIPYQSSYYGQKEQAKRVIDGSLASNYMEGDCCHTEKQMHPWWQLDMKSKMRVHSVAITNRGDCCRERINGAEIRIGNSKKEGGLNSTRCGVVFKMNYEETLSFNCKELEGRYVTVTIPDRIEYLTLCEVQVFADPLEVDGTEASDSSESVDGTEAPASPESDVELPIASGMNVDLTNKSFMFPKESDINHVKLLPEKAMSLKAFTLCMKVLLNVPENRETILFSYRTMFYDELNLWIERDGRIGLYMSGDGIIFPRMKFKSEWNHLCLTWESKYGRTEFWLNGRRSATKVYHQKNTVRSGGIVLLGQDQDSYGGDFDKTQSFVGQIKDLKMWNKVLPLRSLKSLFKGREIGNGNIFDWSSLSYSMIGNVAEV</sequence>
<keyword id="KW-0106">Calcium</keyword>
<keyword id="KW-1015">Disulfide bond</keyword>
<keyword id="KW-0325">Glycoprotein</keyword>
<keyword id="KW-0479">Metal-binding</keyword>
<keyword id="KW-1185">Reference proteome</keyword>
<keyword id="KW-0732">Signal</keyword>
<reference key="1">
    <citation type="journal article" date="1993" name="Proc. R. Soc. B">
        <title>Identification of a novel member of the pentraxin family in Xenopus laevis.</title>
        <authorList>
            <person name="Seery L.T."/>
            <person name="Schoenberg D.R."/>
            <person name="Barbaux S."/>
            <person name="Sharp P.M."/>
            <person name="Whitehead A.S."/>
        </authorList>
    </citation>
    <scope>NUCLEOTIDE SEQUENCE [MRNA]</scope>
    <source>
        <tissue>Liver</tissue>
    </source>
</reference>
<organism>
    <name type="scientific">Xenopus laevis</name>
    <name type="common">African clawed frog</name>
    <dbReference type="NCBI Taxonomy" id="8355"/>
    <lineage>
        <taxon>Eukaryota</taxon>
        <taxon>Metazoa</taxon>
        <taxon>Chordata</taxon>
        <taxon>Craniata</taxon>
        <taxon>Vertebrata</taxon>
        <taxon>Euteleostomi</taxon>
        <taxon>Amphibia</taxon>
        <taxon>Batrachia</taxon>
        <taxon>Anura</taxon>
        <taxon>Pipoidea</taxon>
        <taxon>Pipidae</taxon>
        <taxon>Xenopodinae</taxon>
        <taxon>Xenopus</taxon>
        <taxon>Xenopus</taxon>
    </lineage>
</organism>
<proteinExistence type="evidence at transcript level"/>
<evidence type="ECO:0000250" key="1"/>
<evidence type="ECO:0000255" key="2"/>
<evidence type="ECO:0000255" key="3">
    <source>
        <dbReference type="PROSITE-ProRule" id="PRU01172"/>
    </source>
</evidence>
<evidence type="ECO:0000256" key="4">
    <source>
        <dbReference type="SAM" id="MobiDB-lite"/>
    </source>
</evidence>
<accession>P49263</accession>
<protein>
    <recommendedName>
        <fullName>Pentraxin fusion protein</fullName>
    </recommendedName>
</protein>
<gene>
    <name type="primary">pxn1</name>
</gene>